<organism>
    <name type="scientific">Legionella pneumophila (strain Corby)</name>
    <dbReference type="NCBI Taxonomy" id="400673"/>
    <lineage>
        <taxon>Bacteria</taxon>
        <taxon>Pseudomonadati</taxon>
        <taxon>Pseudomonadota</taxon>
        <taxon>Gammaproteobacteria</taxon>
        <taxon>Legionellales</taxon>
        <taxon>Legionellaceae</taxon>
        <taxon>Legionella</taxon>
    </lineage>
</organism>
<protein>
    <recommendedName>
        <fullName evidence="1">tRNA modification GTPase MnmE</fullName>
        <ecNumber evidence="1">3.6.-.-</ecNumber>
    </recommendedName>
</protein>
<dbReference type="EC" id="3.6.-.-" evidence="1"/>
<dbReference type="EMBL" id="CP000675">
    <property type="protein sequence ID" value="ABQ57203.1"/>
    <property type="molecule type" value="Genomic_DNA"/>
</dbReference>
<dbReference type="RefSeq" id="WP_011947892.1">
    <property type="nucleotide sequence ID" value="NZ_JAPMSS010000003.1"/>
</dbReference>
<dbReference type="SMR" id="A5IIK3"/>
<dbReference type="KEGG" id="lpc:LPC_3317"/>
<dbReference type="HOGENOM" id="CLU_019624_4_1_6"/>
<dbReference type="GO" id="GO:0005829">
    <property type="term" value="C:cytosol"/>
    <property type="evidence" value="ECO:0007669"/>
    <property type="project" value="TreeGrafter"/>
</dbReference>
<dbReference type="GO" id="GO:0005525">
    <property type="term" value="F:GTP binding"/>
    <property type="evidence" value="ECO:0007669"/>
    <property type="project" value="UniProtKB-UniRule"/>
</dbReference>
<dbReference type="GO" id="GO:0003924">
    <property type="term" value="F:GTPase activity"/>
    <property type="evidence" value="ECO:0007669"/>
    <property type="project" value="UniProtKB-UniRule"/>
</dbReference>
<dbReference type="GO" id="GO:0046872">
    <property type="term" value="F:metal ion binding"/>
    <property type="evidence" value="ECO:0007669"/>
    <property type="project" value="UniProtKB-KW"/>
</dbReference>
<dbReference type="GO" id="GO:0030488">
    <property type="term" value="P:tRNA methylation"/>
    <property type="evidence" value="ECO:0007669"/>
    <property type="project" value="TreeGrafter"/>
</dbReference>
<dbReference type="GO" id="GO:0002098">
    <property type="term" value="P:tRNA wobble uridine modification"/>
    <property type="evidence" value="ECO:0007669"/>
    <property type="project" value="TreeGrafter"/>
</dbReference>
<dbReference type="CDD" id="cd04164">
    <property type="entry name" value="trmE"/>
    <property type="match status" value="1"/>
</dbReference>
<dbReference type="CDD" id="cd14858">
    <property type="entry name" value="TrmE_N"/>
    <property type="match status" value="1"/>
</dbReference>
<dbReference type="Gene3D" id="3.40.50.300">
    <property type="entry name" value="P-loop containing nucleotide triphosphate hydrolases"/>
    <property type="match status" value="1"/>
</dbReference>
<dbReference type="Gene3D" id="3.30.1360.120">
    <property type="entry name" value="Probable tRNA modification gtpase trme, domain 1"/>
    <property type="match status" value="1"/>
</dbReference>
<dbReference type="Gene3D" id="1.20.120.430">
    <property type="entry name" value="tRNA modification GTPase MnmE domain 2"/>
    <property type="match status" value="1"/>
</dbReference>
<dbReference type="HAMAP" id="MF_00379">
    <property type="entry name" value="GTPase_MnmE"/>
    <property type="match status" value="1"/>
</dbReference>
<dbReference type="InterPro" id="IPR031168">
    <property type="entry name" value="G_TrmE"/>
</dbReference>
<dbReference type="InterPro" id="IPR006073">
    <property type="entry name" value="GTP-bd"/>
</dbReference>
<dbReference type="InterPro" id="IPR018948">
    <property type="entry name" value="GTP-bd_TrmE_N"/>
</dbReference>
<dbReference type="InterPro" id="IPR004520">
    <property type="entry name" value="GTPase_MnmE"/>
</dbReference>
<dbReference type="InterPro" id="IPR027368">
    <property type="entry name" value="MnmE_dom2"/>
</dbReference>
<dbReference type="InterPro" id="IPR025867">
    <property type="entry name" value="MnmE_helical"/>
</dbReference>
<dbReference type="InterPro" id="IPR027417">
    <property type="entry name" value="P-loop_NTPase"/>
</dbReference>
<dbReference type="InterPro" id="IPR005225">
    <property type="entry name" value="Small_GTP-bd"/>
</dbReference>
<dbReference type="InterPro" id="IPR027266">
    <property type="entry name" value="TrmE/GcvT_dom1"/>
</dbReference>
<dbReference type="NCBIfam" id="TIGR00450">
    <property type="entry name" value="mnmE_trmE_thdF"/>
    <property type="match status" value="1"/>
</dbReference>
<dbReference type="NCBIfam" id="NF003661">
    <property type="entry name" value="PRK05291.1-3"/>
    <property type="match status" value="1"/>
</dbReference>
<dbReference type="NCBIfam" id="TIGR00231">
    <property type="entry name" value="small_GTP"/>
    <property type="match status" value="1"/>
</dbReference>
<dbReference type="PANTHER" id="PTHR42714">
    <property type="entry name" value="TRNA MODIFICATION GTPASE GTPBP3"/>
    <property type="match status" value="1"/>
</dbReference>
<dbReference type="PANTHER" id="PTHR42714:SF2">
    <property type="entry name" value="TRNA MODIFICATION GTPASE GTPBP3, MITOCHONDRIAL"/>
    <property type="match status" value="1"/>
</dbReference>
<dbReference type="Pfam" id="PF01926">
    <property type="entry name" value="MMR_HSR1"/>
    <property type="match status" value="1"/>
</dbReference>
<dbReference type="Pfam" id="PF12631">
    <property type="entry name" value="MnmE_helical"/>
    <property type="match status" value="1"/>
</dbReference>
<dbReference type="Pfam" id="PF10396">
    <property type="entry name" value="TrmE_N"/>
    <property type="match status" value="1"/>
</dbReference>
<dbReference type="SUPFAM" id="SSF52540">
    <property type="entry name" value="P-loop containing nucleoside triphosphate hydrolases"/>
    <property type="match status" value="1"/>
</dbReference>
<dbReference type="PROSITE" id="PS51709">
    <property type="entry name" value="G_TRME"/>
    <property type="match status" value="1"/>
</dbReference>
<keyword id="KW-0963">Cytoplasm</keyword>
<keyword id="KW-0342">GTP-binding</keyword>
<keyword id="KW-0378">Hydrolase</keyword>
<keyword id="KW-0460">Magnesium</keyword>
<keyword id="KW-0479">Metal-binding</keyword>
<keyword id="KW-0547">Nucleotide-binding</keyword>
<keyword id="KW-0630">Potassium</keyword>
<keyword id="KW-0819">tRNA processing</keyword>
<name>MNME_LEGPC</name>
<evidence type="ECO:0000255" key="1">
    <source>
        <dbReference type="HAMAP-Rule" id="MF_00379"/>
    </source>
</evidence>
<feature type="chain" id="PRO_0000345816" description="tRNA modification GTPase MnmE">
    <location>
        <begin position="1"/>
        <end position="446"/>
    </location>
</feature>
<feature type="domain" description="TrmE-type G">
    <location>
        <begin position="215"/>
        <end position="370"/>
    </location>
</feature>
<feature type="binding site" evidence="1">
    <location>
        <position position="22"/>
    </location>
    <ligand>
        <name>(6S)-5-formyl-5,6,7,8-tetrahydrofolate</name>
        <dbReference type="ChEBI" id="CHEBI:57457"/>
    </ligand>
</feature>
<feature type="binding site" evidence="1">
    <location>
        <position position="80"/>
    </location>
    <ligand>
        <name>(6S)-5-formyl-5,6,7,8-tetrahydrofolate</name>
        <dbReference type="ChEBI" id="CHEBI:57457"/>
    </ligand>
</feature>
<feature type="binding site" evidence="1">
    <location>
        <position position="119"/>
    </location>
    <ligand>
        <name>(6S)-5-formyl-5,6,7,8-tetrahydrofolate</name>
        <dbReference type="ChEBI" id="CHEBI:57457"/>
    </ligand>
</feature>
<feature type="binding site" evidence="1">
    <location>
        <begin position="225"/>
        <end position="230"/>
    </location>
    <ligand>
        <name>GTP</name>
        <dbReference type="ChEBI" id="CHEBI:37565"/>
    </ligand>
</feature>
<feature type="binding site" evidence="1">
    <location>
        <position position="225"/>
    </location>
    <ligand>
        <name>K(+)</name>
        <dbReference type="ChEBI" id="CHEBI:29103"/>
    </ligand>
</feature>
<feature type="binding site" evidence="1">
    <location>
        <position position="229"/>
    </location>
    <ligand>
        <name>Mg(2+)</name>
        <dbReference type="ChEBI" id="CHEBI:18420"/>
    </ligand>
</feature>
<feature type="binding site" evidence="1">
    <location>
        <begin position="244"/>
        <end position="250"/>
    </location>
    <ligand>
        <name>GTP</name>
        <dbReference type="ChEBI" id="CHEBI:37565"/>
    </ligand>
</feature>
<feature type="binding site" evidence="1">
    <location>
        <position position="244"/>
    </location>
    <ligand>
        <name>K(+)</name>
        <dbReference type="ChEBI" id="CHEBI:29103"/>
    </ligand>
</feature>
<feature type="binding site" evidence="1">
    <location>
        <position position="246"/>
    </location>
    <ligand>
        <name>K(+)</name>
        <dbReference type="ChEBI" id="CHEBI:29103"/>
    </ligand>
</feature>
<feature type="binding site" evidence="1">
    <location>
        <position position="249"/>
    </location>
    <ligand>
        <name>K(+)</name>
        <dbReference type="ChEBI" id="CHEBI:29103"/>
    </ligand>
</feature>
<feature type="binding site" evidence="1">
    <location>
        <position position="250"/>
    </location>
    <ligand>
        <name>Mg(2+)</name>
        <dbReference type="ChEBI" id="CHEBI:18420"/>
    </ligand>
</feature>
<feature type="binding site" evidence="1">
    <location>
        <begin position="269"/>
        <end position="272"/>
    </location>
    <ligand>
        <name>GTP</name>
        <dbReference type="ChEBI" id="CHEBI:37565"/>
    </ligand>
</feature>
<feature type="binding site" evidence="1">
    <location>
        <position position="446"/>
    </location>
    <ligand>
        <name>(6S)-5-formyl-5,6,7,8-tetrahydrofolate</name>
        <dbReference type="ChEBI" id="CHEBI:57457"/>
    </ligand>
</feature>
<proteinExistence type="inferred from homology"/>
<gene>
    <name evidence="1" type="primary">mnmE</name>
    <name evidence="1" type="synonym">trmE</name>
    <name type="ordered locus">LPC_3317</name>
</gene>
<comment type="function">
    <text evidence="1">Exhibits a very high intrinsic GTPase hydrolysis rate. Involved in the addition of a carboxymethylaminomethyl (cmnm) group at the wobble position (U34) of certain tRNAs, forming tRNA-cmnm(5)s(2)U34.</text>
</comment>
<comment type="cofactor">
    <cofactor evidence="1">
        <name>K(+)</name>
        <dbReference type="ChEBI" id="CHEBI:29103"/>
    </cofactor>
    <text evidence="1">Binds 1 potassium ion per subunit.</text>
</comment>
<comment type="subunit">
    <text evidence="1">Homodimer. Heterotetramer of two MnmE and two MnmG subunits.</text>
</comment>
<comment type="subcellular location">
    <subcellularLocation>
        <location evidence="1">Cytoplasm</location>
    </subcellularLocation>
</comment>
<comment type="similarity">
    <text evidence="1">Belongs to the TRAFAC class TrmE-Era-EngA-EngB-Septin-like GTPase superfamily. TrmE GTPase family.</text>
</comment>
<reference key="1">
    <citation type="submission" date="2006-11" db="EMBL/GenBank/DDBJ databases">
        <title>Identification and characterization of a new conjugation/ type IVA secretion system (trb/tra) of L. pneumophila Corby localized on a mobile genomic island.</title>
        <authorList>
            <person name="Gloeckner G."/>
            <person name="Albert-Weissenberger C."/>
            <person name="Weinmann E."/>
            <person name="Jacobi S."/>
            <person name="Schunder E."/>
            <person name="Steinert M."/>
            <person name="Buchrieser C."/>
            <person name="Hacker J."/>
            <person name="Heuner K."/>
        </authorList>
    </citation>
    <scope>NUCLEOTIDE SEQUENCE [LARGE SCALE GENOMIC DNA]</scope>
    <source>
        <strain>Corby</strain>
    </source>
</reference>
<sequence length="446" mass="48919">MSIDTIVAIATPPGRGGVGIVRISGPNAYAIALCLNGNKALQPRLATFCSLYKGNNEVLDQGLVLYFKGPHSFTGEDVIEIQAHGSPVVLDLLIKESIAAGARLARPGEFSERAFLNDKIDLIQAEAIADLIQASSDTAARMALKSLQGDFSKKINQLNEELIYLRMYVEAAIDFPEEEIDFLNDGNVSQLLQRIIGRLEEIRSQANQGVLLREGLSLVIAGRPNAGKSTLINNLAGRDVAIVTEIAGTTRDIMREHILLDDIPLHIIDTAGLRDSDDLVEKEGIKRAWQELKRADCVLLVVDINNPDQQNSLLNELRLTLPNKIPIITVYNKIDTTKLTAKCDEHTVYLSAKTGEGLDELKKVIKQVVGYQPTEGQFLARRRHLQALDEAKALLLTGQSQLTNHKAGELLAEDLRLAHQTLCEITGEFTSDDLLGKIFSSFCIGK</sequence>
<accession>A5IIK3</accession>